<proteinExistence type="predicted"/>
<accession>Q58248</accession>
<protein>
    <recommendedName>
        <fullName>Uncharacterized protein MJ0838</fullName>
    </recommendedName>
</protein>
<name>Y838_METJA</name>
<sequence>MKVAILTDGVYGDRAYNTIKSKFPCDFITVKYYGDFDEITISENTIEKLKDYDLFITYTLNPDLTYELVRKIKELNNKAFVLVGAWKGEGFKKQIESFGNAFCPYLMCDIDEDELKDYKDYLDNYPHLKEFLKYFGKPKVKLYIKNNKIEKIDVLREAPCGSTSETLKEFVGREFNDKTLIDIGLRVQHFCRAGKIRLFVEKEGKKTKAGKILVSGIQVIQIP</sequence>
<keyword id="KW-1185">Reference proteome</keyword>
<reference key="1">
    <citation type="journal article" date="1996" name="Science">
        <title>Complete genome sequence of the methanogenic archaeon, Methanococcus jannaschii.</title>
        <authorList>
            <person name="Bult C.J."/>
            <person name="White O."/>
            <person name="Olsen G.J."/>
            <person name="Zhou L."/>
            <person name="Fleischmann R.D."/>
            <person name="Sutton G.G."/>
            <person name="Blake J.A."/>
            <person name="FitzGerald L.M."/>
            <person name="Clayton R.A."/>
            <person name="Gocayne J.D."/>
            <person name="Kerlavage A.R."/>
            <person name="Dougherty B.A."/>
            <person name="Tomb J.-F."/>
            <person name="Adams M.D."/>
            <person name="Reich C.I."/>
            <person name="Overbeek R."/>
            <person name="Kirkness E.F."/>
            <person name="Weinstock K.G."/>
            <person name="Merrick J.M."/>
            <person name="Glodek A."/>
            <person name="Scott J.L."/>
            <person name="Geoghagen N.S.M."/>
            <person name="Weidman J.F."/>
            <person name="Fuhrmann J.L."/>
            <person name="Nguyen D."/>
            <person name="Utterback T.R."/>
            <person name="Kelley J.M."/>
            <person name="Peterson J.D."/>
            <person name="Sadow P.W."/>
            <person name="Hanna M.C."/>
            <person name="Cotton M.D."/>
            <person name="Roberts K.M."/>
            <person name="Hurst M.A."/>
            <person name="Kaine B.P."/>
            <person name="Borodovsky M."/>
            <person name="Klenk H.-P."/>
            <person name="Fraser C.M."/>
            <person name="Smith H.O."/>
            <person name="Woese C.R."/>
            <person name="Venter J.C."/>
        </authorList>
    </citation>
    <scope>NUCLEOTIDE SEQUENCE [LARGE SCALE GENOMIC DNA]</scope>
    <source>
        <strain>ATCC 43067 / DSM 2661 / JAL-1 / JCM 10045 / NBRC 100440</strain>
    </source>
</reference>
<gene>
    <name type="ordered locus">MJ0838</name>
</gene>
<comment type="similarity">
    <text evidence="1">To M.jannaschii MJ0575.</text>
</comment>
<evidence type="ECO:0000305" key="1"/>
<dbReference type="EMBL" id="L77117">
    <property type="protein sequence ID" value="AAB98843.1"/>
    <property type="molecule type" value="Genomic_DNA"/>
</dbReference>
<dbReference type="PIR" id="F64404">
    <property type="entry name" value="F64404"/>
</dbReference>
<dbReference type="RefSeq" id="WP_010870352.1">
    <property type="nucleotide sequence ID" value="NC_000909.1"/>
</dbReference>
<dbReference type="SMR" id="Q58248"/>
<dbReference type="PaxDb" id="243232-MJ_0838"/>
<dbReference type="EnsemblBacteria" id="AAB98843">
    <property type="protein sequence ID" value="AAB98843"/>
    <property type="gene ID" value="MJ_0838"/>
</dbReference>
<dbReference type="GeneID" id="1451726"/>
<dbReference type="KEGG" id="mja:MJ_0838"/>
<dbReference type="eggNOG" id="arCOG02469">
    <property type="taxonomic scope" value="Archaea"/>
</dbReference>
<dbReference type="HOGENOM" id="CLU_110109_0_0_2"/>
<dbReference type="InParanoid" id="Q58248"/>
<dbReference type="OrthoDB" id="146618at2157"/>
<dbReference type="PhylomeDB" id="Q58248"/>
<dbReference type="Proteomes" id="UP000000805">
    <property type="component" value="Chromosome"/>
</dbReference>
<dbReference type="InterPro" id="IPR003745">
    <property type="entry name" value="DUF166"/>
</dbReference>
<dbReference type="Pfam" id="PF02593">
    <property type="entry name" value="DUF166"/>
    <property type="match status" value="1"/>
</dbReference>
<feature type="chain" id="PRO_0000107075" description="Uncharacterized protein MJ0838">
    <location>
        <begin position="1"/>
        <end position="223"/>
    </location>
</feature>
<organism>
    <name type="scientific">Methanocaldococcus jannaschii (strain ATCC 43067 / DSM 2661 / JAL-1 / JCM 10045 / NBRC 100440)</name>
    <name type="common">Methanococcus jannaschii</name>
    <dbReference type="NCBI Taxonomy" id="243232"/>
    <lineage>
        <taxon>Archaea</taxon>
        <taxon>Methanobacteriati</taxon>
        <taxon>Methanobacteriota</taxon>
        <taxon>Methanomada group</taxon>
        <taxon>Methanococci</taxon>
        <taxon>Methanococcales</taxon>
        <taxon>Methanocaldococcaceae</taxon>
        <taxon>Methanocaldococcus</taxon>
    </lineage>
</organism>